<feature type="chain" id="PRO_1000044452" description="Sec-independent protein translocase protein TatA">
    <location>
        <begin position="1"/>
        <end position="85"/>
    </location>
</feature>
<feature type="transmembrane region" description="Helical" evidence="1">
    <location>
        <begin position="1"/>
        <end position="21"/>
    </location>
</feature>
<feature type="region of interest" description="Disordered" evidence="2">
    <location>
        <begin position="39"/>
        <end position="85"/>
    </location>
</feature>
<sequence length="85" mass="9580">MGSMSIWHWLVVGVLVLLLFGKGRFSDMMGDVAKGIKSFKKGMSEEDEPTQPAEPRPTPRLQQQPPIEPNADPKLQPMQDDRPQH</sequence>
<dbReference type="EMBL" id="CP000699">
    <property type="protein sequence ID" value="ABQ70275.1"/>
    <property type="molecule type" value="Genomic_DNA"/>
</dbReference>
<dbReference type="SMR" id="A5VDA9"/>
<dbReference type="STRING" id="392499.Swit_3930"/>
<dbReference type="PaxDb" id="392499-Swit_3930"/>
<dbReference type="KEGG" id="swi:Swit_3930"/>
<dbReference type="eggNOG" id="COG1826">
    <property type="taxonomic scope" value="Bacteria"/>
</dbReference>
<dbReference type="HOGENOM" id="CLU_086034_5_0_5"/>
<dbReference type="OrthoDB" id="7161179at2"/>
<dbReference type="Proteomes" id="UP000001989">
    <property type="component" value="Chromosome"/>
</dbReference>
<dbReference type="GO" id="GO:0033281">
    <property type="term" value="C:TAT protein transport complex"/>
    <property type="evidence" value="ECO:0007669"/>
    <property type="project" value="UniProtKB-UniRule"/>
</dbReference>
<dbReference type="GO" id="GO:0008320">
    <property type="term" value="F:protein transmembrane transporter activity"/>
    <property type="evidence" value="ECO:0007669"/>
    <property type="project" value="UniProtKB-UniRule"/>
</dbReference>
<dbReference type="GO" id="GO:0043953">
    <property type="term" value="P:protein transport by the Tat complex"/>
    <property type="evidence" value="ECO:0007669"/>
    <property type="project" value="UniProtKB-UniRule"/>
</dbReference>
<dbReference type="Gene3D" id="1.20.5.3310">
    <property type="match status" value="1"/>
</dbReference>
<dbReference type="HAMAP" id="MF_00236">
    <property type="entry name" value="TatA_E"/>
    <property type="match status" value="1"/>
</dbReference>
<dbReference type="InterPro" id="IPR003369">
    <property type="entry name" value="TatA/B/E"/>
</dbReference>
<dbReference type="InterPro" id="IPR006312">
    <property type="entry name" value="TatA/E"/>
</dbReference>
<dbReference type="NCBIfam" id="NF001940">
    <property type="entry name" value="PRK00720.1"/>
    <property type="match status" value="1"/>
</dbReference>
<dbReference type="NCBIfam" id="TIGR01411">
    <property type="entry name" value="tatAE"/>
    <property type="match status" value="1"/>
</dbReference>
<dbReference type="PANTHER" id="PTHR42982">
    <property type="entry name" value="SEC-INDEPENDENT PROTEIN TRANSLOCASE PROTEIN TATA"/>
    <property type="match status" value="1"/>
</dbReference>
<dbReference type="PANTHER" id="PTHR42982:SF1">
    <property type="entry name" value="SEC-INDEPENDENT PROTEIN TRANSLOCASE PROTEIN TATA"/>
    <property type="match status" value="1"/>
</dbReference>
<dbReference type="Pfam" id="PF02416">
    <property type="entry name" value="TatA_B_E"/>
    <property type="match status" value="1"/>
</dbReference>
<reference key="1">
    <citation type="journal article" date="2010" name="J. Bacteriol.">
        <title>Genome sequence of the dioxin-mineralizing bacterium Sphingomonas wittichii RW1.</title>
        <authorList>
            <person name="Miller T.R."/>
            <person name="Delcher A.L."/>
            <person name="Salzberg S.L."/>
            <person name="Saunders E."/>
            <person name="Detter J.C."/>
            <person name="Halden R.U."/>
        </authorList>
    </citation>
    <scope>NUCLEOTIDE SEQUENCE [LARGE SCALE GENOMIC DNA]</scope>
    <source>
        <strain>DSM 6014 / CCUG 31198 / JCM 15750 / NBRC 105917 / EY 4224 / RW1</strain>
    </source>
</reference>
<gene>
    <name evidence="1" type="primary">tatA</name>
    <name type="ordered locus">Swit_3930</name>
</gene>
<protein>
    <recommendedName>
        <fullName evidence="1">Sec-independent protein translocase protein TatA</fullName>
    </recommendedName>
</protein>
<name>TATA_RHIWR</name>
<comment type="function">
    <text evidence="1">Part of the twin-arginine translocation (Tat) system that transports large folded proteins containing a characteristic twin-arginine motif in their signal peptide across membranes. TatA could form the protein-conducting channel of the Tat system.</text>
</comment>
<comment type="subunit">
    <text evidence="1">The Tat system comprises two distinct complexes: a TatABC complex, containing multiple copies of TatA, TatB and TatC subunits, and a separate TatA complex, containing only TatA subunits. Substrates initially bind to the TatABC complex, which probably triggers association of the separate TatA complex to form the active translocon.</text>
</comment>
<comment type="subcellular location">
    <subcellularLocation>
        <location evidence="1">Cell inner membrane</location>
        <topology evidence="1">Single-pass membrane protein</topology>
    </subcellularLocation>
</comment>
<comment type="similarity">
    <text evidence="1">Belongs to the TatA/E family.</text>
</comment>
<organism>
    <name type="scientific">Rhizorhabdus wittichii (strain DSM 6014 / CCUG 31198 / JCM 15750 / NBRC 105917 / EY 4224 / RW1)</name>
    <name type="common">Sphingomonas wittichii</name>
    <dbReference type="NCBI Taxonomy" id="392499"/>
    <lineage>
        <taxon>Bacteria</taxon>
        <taxon>Pseudomonadati</taxon>
        <taxon>Pseudomonadota</taxon>
        <taxon>Alphaproteobacteria</taxon>
        <taxon>Sphingomonadales</taxon>
        <taxon>Sphingomonadaceae</taxon>
        <taxon>Rhizorhabdus</taxon>
    </lineage>
</organism>
<accession>A5VDA9</accession>
<evidence type="ECO:0000255" key="1">
    <source>
        <dbReference type="HAMAP-Rule" id="MF_00236"/>
    </source>
</evidence>
<evidence type="ECO:0000256" key="2">
    <source>
        <dbReference type="SAM" id="MobiDB-lite"/>
    </source>
</evidence>
<keyword id="KW-0997">Cell inner membrane</keyword>
<keyword id="KW-1003">Cell membrane</keyword>
<keyword id="KW-0472">Membrane</keyword>
<keyword id="KW-0653">Protein transport</keyword>
<keyword id="KW-1185">Reference proteome</keyword>
<keyword id="KW-0811">Translocation</keyword>
<keyword id="KW-0812">Transmembrane</keyword>
<keyword id="KW-1133">Transmembrane helix</keyword>
<keyword id="KW-0813">Transport</keyword>
<proteinExistence type="inferred from homology"/>